<evidence type="ECO:0000250" key="1"/>
<evidence type="ECO:0000255" key="2"/>
<evidence type="ECO:0000305" key="3"/>
<proteinExistence type="inferred from homology"/>
<reference key="1">
    <citation type="journal article" date="2004" name="Nat. Genet.">
        <title>Comparison of genome degradation in Paratyphi A and Typhi, human-restricted serovars of Salmonella enterica that cause typhoid.</title>
        <authorList>
            <person name="McClelland M."/>
            <person name="Sanderson K.E."/>
            <person name="Clifton S.W."/>
            <person name="Latreille P."/>
            <person name="Porwollik S."/>
            <person name="Sabo A."/>
            <person name="Meyer R."/>
            <person name="Bieri T."/>
            <person name="Ozersky P."/>
            <person name="McLellan M."/>
            <person name="Harkins C.R."/>
            <person name="Wang C."/>
            <person name="Nguyen C."/>
            <person name="Berghoff A."/>
            <person name="Elliott G."/>
            <person name="Kohlberg S."/>
            <person name="Strong C."/>
            <person name="Du F."/>
            <person name="Carter J."/>
            <person name="Kremizki C."/>
            <person name="Layman D."/>
            <person name="Leonard S."/>
            <person name="Sun H."/>
            <person name="Fulton L."/>
            <person name="Nash W."/>
            <person name="Miner T."/>
            <person name="Minx P."/>
            <person name="Delehaunty K."/>
            <person name="Fronick C."/>
            <person name="Magrini V."/>
            <person name="Nhan M."/>
            <person name="Warren W."/>
            <person name="Florea L."/>
            <person name="Spieth J."/>
            <person name="Wilson R.K."/>
        </authorList>
    </citation>
    <scope>NUCLEOTIDE SEQUENCE [LARGE SCALE GENOMIC DNA]</scope>
    <source>
        <strain>ATCC 9150 / SARB42</strain>
    </source>
</reference>
<name>YFBV_SALPA</name>
<feature type="chain" id="PRO_0000080819" description="UPF0208 membrane protein YfbV">
    <location>
        <begin position="1"/>
        <end position="151"/>
    </location>
</feature>
<feature type="topological domain" description="Cytoplasmic" evidence="2">
    <location>
        <begin position="1"/>
        <end position="45"/>
    </location>
</feature>
<feature type="transmembrane region" description="Helical" evidence="2">
    <location>
        <begin position="46"/>
        <end position="65"/>
    </location>
</feature>
<feature type="topological domain" description="Periplasmic" evidence="2">
    <location>
        <begin position="66"/>
        <end position="68"/>
    </location>
</feature>
<feature type="transmembrane region" description="Helical" evidence="2">
    <location>
        <begin position="69"/>
        <end position="91"/>
    </location>
</feature>
<feature type="topological domain" description="Cytoplasmic" evidence="2">
    <location>
        <begin position="92"/>
        <end position="151"/>
    </location>
</feature>
<keyword id="KW-0997">Cell inner membrane</keyword>
<keyword id="KW-1003">Cell membrane</keyword>
<keyword id="KW-0472">Membrane</keyword>
<keyword id="KW-0812">Transmembrane</keyword>
<keyword id="KW-1133">Transmembrane helix</keyword>
<organism>
    <name type="scientific">Salmonella paratyphi A (strain ATCC 9150 / SARB42)</name>
    <dbReference type="NCBI Taxonomy" id="295319"/>
    <lineage>
        <taxon>Bacteria</taxon>
        <taxon>Pseudomonadati</taxon>
        <taxon>Pseudomonadota</taxon>
        <taxon>Gammaproteobacteria</taxon>
        <taxon>Enterobacterales</taxon>
        <taxon>Enterobacteriaceae</taxon>
        <taxon>Salmonella</taxon>
    </lineage>
</organism>
<comment type="subcellular location">
    <subcellularLocation>
        <location evidence="1">Cell inner membrane</location>
        <topology evidence="1">Multi-pass membrane protein</topology>
    </subcellularLocation>
</comment>
<comment type="similarity">
    <text evidence="3">Belongs to the UPF0208 family.</text>
</comment>
<sequence length="151" mass="17201">MSTPDNRSVNFFSLFRRGQHYAKTWPMEKRLAPVFVENRVIRMTRYAIRFMPPVAVFTLCWQIALGGQLGPAVATALFALSLPMQGLWWLGKRSVTPLPPSILNWFYEVRGKLQEAGQALAPVEGKPDYQALADTLKRAFKQLDKTFLDDL</sequence>
<dbReference type="EMBL" id="CP000026">
    <property type="protein sequence ID" value="AAV76530.1"/>
    <property type="molecule type" value="Genomic_DNA"/>
</dbReference>
<dbReference type="RefSeq" id="WP_000106617.1">
    <property type="nucleotide sequence ID" value="NC_006511.1"/>
</dbReference>
<dbReference type="KEGG" id="spt:SPA0528"/>
<dbReference type="HOGENOM" id="CLU_128746_0_0_6"/>
<dbReference type="Proteomes" id="UP000008185">
    <property type="component" value="Chromosome"/>
</dbReference>
<dbReference type="GO" id="GO:0005886">
    <property type="term" value="C:plasma membrane"/>
    <property type="evidence" value="ECO:0007669"/>
    <property type="project" value="UniProtKB-SubCell"/>
</dbReference>
<dbReference type="HAMAP" id="MF_01101">
    <property type="entry name" value="UPF0208"/>
    <property type="match status" value="1"/>
</dbReference>
<dbReference type="InterPro" id="IPR007334">
    <property type="entry name" value="UPF0208"/>
</dbReference>
<dbReference type="NCBIfam" id="NF002493">
    <property type="entry name" value="PRK01816.1"/>
    <property type="match status" value="1"/>
</dbReference>
<dbReference type="Pfam" id="PF04217">
    <property type="entry name" value="DUF412"/>
    <property type="match status" value="1"/>
</dbReference>
<accession>Q5PN46</accession>
<gene>
    <name type="primary">yfbV</name>
    <name type="ordered locus">SPA0528</name>
</gene>
<protein>
    <recommendedName>
        <fullName>UPF0208 membrane protein YfbV</fullName>
    </recommendedName>
</protein>